<geneLocation type="chloroplast"/>
<comment type="function">
    <text evidence="1">One of the components of the core complex of photosystem II (PSII), required for its stability and/or assembly. PSII is a light-driven water:plastoquinone oxidoreductase that uses light energy to abstract electrons from H(2)O, generating O(2) and a proton gradient subsequently used for ATP formation. It consists of a core antenna complex that captures photons, and an electron transfer chain that converts photonic excitation into a charge separation.</text>
</comment>
<comment type="subunit">
    <text evidence="1">PSII is composed of 1 copy each of membrane proteins PsbA, PsbB, PsbC, PsbD, PsbE, PsbF, PsbH, PsbI, PsbJ, PsbK, PsbL, PsbM, PsbT, PsbX, PsbY, PsbZ, Psb30/Ycf12, at least 3 peripheral proteins of the oxygen-evolving complex and a large number of cofactors. It forms dimeric complexes.</text>
</comment>
<comment type="subcellular location">
    <subcellularLocation>
        <location evidence="1">Plastid</location>
        <location evidence="1">Chloroplast thylakoid membrane</location>
        <topology evidence="1">Single-pass membrane protein</topology>
    </subcellularLocation>
</comment>
<comment type="similarity">
    <text evidence="1">Belongs to the PsbI family.</text>
</comment>
<proteinExistence type="inferred from homology"/>
<gene>
    <name evidence="1" type="primary">psbI</name>
</gene>
<protein>
    <recommendedName>
        <fullName evidence="1">Photosystem II reaction center protein I</fullName>
        <shortName evidence="1">PSII-I</shortName>
    </recommendedName>
    <alternativeName>
        <fullName evidence="1">PSII 4.8 kDa protein</fullName>
    </alternativeName>
</protein>
<keyword id="KW-0150">Chloroplast</keyword>
<keyword id="KW-0472">Membrane</keyword>
<keyword id="KW-0602">Photosynthesis</keyword>
<keyword id="KW-0604">Photosystem II</keyword>
<keyword id="KW-0934">Plastid</keyword>
<keyword id="KW-0674">Reaction center</keyword>
<keyword id="KW-0793">Thylakoid</keyword>
<keyword id="KW-0812">Transmembrane</keyword>
<keyword id="KW-1133">Transmembrane helix</keyword>
<reference key="1">
    <citation type="journal article" date="2008" name="BMC Plant Biol.">
        <title>Comparative chloroplast genomics and phylogenetics of Fagopyrum esculentum ssp. ancestrale - a wild ancestor of cultivated buckwheat.</title>
        <authorList>
            <person name="Logacheva M.D."/>
            <person name="Samigullin T.H."/>
            <person name="Dhingra A."/>
            <person name="Penin A.A."/>
        </authorList>
    </citation>
    <scope>NUCLEOTIDE SEQUENCE [LARGE SCALE GENOMIC DNA]</scope>
</reference>
<feature type="chain" id="PRO_0000353230" description="Photosystem II reaction center protein I">
    <location>
        <begin position="1"/>
        <end position="36"/>
    </location>
</feature>
<feature type="transmembrane region" description="Helical" evidence="1">
    <location>
        <begin position="4"/>
        <end position="24"/>
    </location>
</feature>
<sequence>MLTLKLFVYTVVIFFVSLFIFGFLSNDPGRNPGREE</sequence>
<dbReference type="EMBL" id="EU254477">
    <property type="protein sequence ID" value="ABY79716.1"/>
    <property type="molecule type" value="Genomic_DNA"/>
</dbReference>
<dbReference type="RefSeq" id="YP_001936501.1">
    <property type="nucleotide sequence ID" value="NC_010776.1"/>
</dbReference>
<dbReference type="SMR" id="B2XWN3"/>
<dbReference type="GeneID" id="6335968"/>
<dbReference type="GO" id="GO:0009535">
    <property type="term" value="C:chloroplast thylakoid membrane"/>
    <property type="evidence" value="ECO:0007669"/>
    <property type="project" value="UniProtKB-SubCell"/>
</dbReference>
<dbReference type="GO" id="GO:0009539">
    <property type="term" value="C:photosystem II reaction center"/>
    <property type="evidence" value="ECO:0007669"/>
    <property type="project" value="InterPro"/>
</dbReference>
<dbReference type="GO" id="GO:0015979">
    <property type="term" value="P:photosynthesis"/>
    <property type="evidence" value="ECO:0007669"/>
    <property type="project" value="UniProtKB-UniRule"/>
</dbReference>
<dbReference type="HAMAP" id="MF_01316">
    <property type="entry name" value="PSII_PsbI"/>
    <property type="match status" value="1"/>
</dbReference>
<dbReference type="InterPro" id="IPR003686">
    <property type="entry name" value="PSII_PsbI"/>
</dbReference>
<dbReference type="InterPro" id="IPR037271">
    <property type="entry name" value="PSII_PsbI_sf"/>
</dbReference>
<dbReference type="NCBIfam" id="NF002735">
    <property type="entry name" value="PRK02655.1"/>
    <property type="match status" value="1"/>
</dbReference>
<dbReference type="PANTHER" id="PTHR35772">
    <property type="entry name" value="PHOTOSYSTEM II REACTION CENTER PROTEIN I"/>
    <property type="match status" value="1"/>
</dbReference>
<dbReference type="PANTHER" id="PTHR35772:SF1">
    <property type="entry name" value="PHOTOSYSTEM II REACTION CENTER PROTEIN I"/>
    <property type="match status" value="1"/>
</dbReference>
<dbReference type="Pfam" id="PF02532">
    <property type="entry name" value="PsbI"/>
    <property type="match status" value="1"/>
</dbReference>
<dbReference type="SUPFAM" id="SSF161041">
    <property type="entry name" value="Photosystem II reaction center protein I, PsbI"/>
    <property type="match status" value="1"/>
</dbReference>
<name>PSBI_FAGEA</name>
<organism>
    <name type="scientific">Fagopyrum esculentum subsp. ancestrale</name>
    <name type="common">Wild buckwheat</name>
    <dbReference type="NCBI Taxonomy" id="180217"/>
    <lineage>
        <taxon>Eukaryota</taxon>
        <taxon>Viridiplantae</taxon>
        <taxon>Streptophyta</taxon>
        <taxon>Embryophyta</taxon>
        <taxon>Tracheophyta</taxon>
        <taxon>Spermatophyta</taxon>
        <taxon>Magnoliopsida</taxon>
        <taxon>eudicotyledons</taxon>
        <taxon>Gunneridae</taxon>
        <taxon>Pentapetalae</taxon>
        <taxon>Caryophyllales</taxon>
        <taxon>Polygonaceae</taxon>
        <taxon>Polygonoideae</taxon>
        <taxon>Fagopyreae</taxon>
        <taxon>Fagopyrum</taxon>
    </lineage>
</organism>
<accession>B2XWN3</accession>
<evidence type="ECO:0000255" key="1">
    <source>
        <dbReference type="HAMAP-Rule" id="MF_01316"/>
    </source>
</evidence>